<gene>
    <name evidence="1" type="primary">tsaD</name>
    <name type="synonym">gcp</name>
    <name type="ordered locus">LHK_02369</name>
</gene>
<reference key="1">
    <citation type="journal article" date="2009" name="PLoS Genet.">
        <title>The complete genome and proteome of Laribacter hongkongensis reveal potential mechanisms for adaptations to different temperatures and habitats.</title>
        <authorList>
            <person name="Woo P.C.Y."/>
            <person name="Lau S.K.P."/>
            <person name="Tse H."/>
            <person name="Teng J.L.L."/>
            <person name="Curreem S.O."/>
            <person name="Tsang A.K.L."/>
            <person name="Fan R.Y.Y."/>
            <person name="Wong G.K.M."/>
            <person name="Huang Y."/>
            <person name="Loman N.J."/>
            <person name="Snyder L.A.S."/>
            <person name="Cai J.J."/>
            <person name="Huang J.-D."/>
            <person name="Mak W."/>
            <person name="Pallen M.J."/>
            <person name="Lok S."/>
            <person name="Yuen K.-Y."/>
        </authorList>
    </citation>
    <scope>NUCLEOTIDE SEQUENCE [LARGE SCALE GENOMIC DNA]</scope>
    <source>
        <strain>HLHK9</strain>
    </source>
</reference>
<evidence type="ECO:0000255" key="1">
    <source>
        <dbReference type="HAMAP-Rule" id="MF_01445"/>
    </source>
</evidence>
<feature type="chain" id="PRO_1000184968" description="tRNA N6-adenosine threonylcarbamoyltransferase">
    <location>
        <begin position="1"/>
        <end position="345"/>
    </location>
</feature>
<feature type="binding site" evidence="1">
    <location>
        <position position="111"/>
    </location>
    <ligand>
        <name>Fe cation</name>
        <dbReference type="ChEBI" id="CHEBI:24875"/>
    </ligand>
</feature>
<feature type="binding site" evidence="1">
    <location>
        <position position="115"/>
    </location>
    <ligand>
        <name>Fe cation</name>
        <dbReference type="ChEBI" id="CHEBI:24875"/>
    </ligand>
</feature>
<feature type="binding site" evidence="1">
    <location>
        <begin position="134"/>
        <end position="138"/>
    </location>
    <ligand>
        <name>substrate</name>
    </ligand>
</feature>
<feature type="binding site" evidence="1">
    <location>
        <position position="167"/>
    </location>
    <ligand>
        <name>substrate</name>
    </ligand>
</feature>
<feature type="binding site" evidence="1">
    <location>
        <position position="180"/>
    </location>
    <ligand>
        <name>substrate</name>
    </ligand>
</feature>
<feature type="binding site" evidence="1">
    <location>
        <position position="277"/>
    </location>
    <ligand>
        <name>substrate</name>
    </ligand>
</feature>
<feature type="binding site" evidence="1">
    <location>
        <position position="305"/>
    </location>
    <ligand>
        <name>Fe cation</name>
        <dbReference type="ChEBI" id="CHEBI:24875"/>
    </ligand>
</feature>
<accession>C1DB12</accession>
<organism>
    <name type="scientific">Laribacter hongkongensis (strain HLHK9)</name>
    <dbReference type="NCBI Taxonomy" id="557598"/>
    <lineage>
        <taxon>Bacteria</taxon>
        <taxon>Pseudomonadati</taxon>
        <taxon>Pseudomonadota</taxon>
        <taxon>Betaproteobacteria</taxon>
        <taxon>Neisseriales</taxon>
        <taxon>Aquaspirillaceae</taxon>
        <taxon>Laribacter</taxon>
    </lineage>
</organism>
<protein>
    <recommendedName>
        <fullName evidence="1">tRNA N6-adenosine threonylcarbamoyltransferase</fullName>
        <ecNumber evidence="1">2.3.1.234</ecNumber>
    </recommendedName>
    <alternativeName>
        <fullName evidence="1">N6-L-threonylcarbamoyladenine synthase</fullName>
        <shortName evidence="1">t(6)A synthase</shortName>
    </alternativeName>
    <alternativeName>
        <fullName evidence="1">t(6)A37 threonylcarbamoyladenosine biosynthesis protein TsaD</fullName>
    </alternativeName>
    <alternativeName>
        <fullName evidence="1">tRNA threonylcarbamoyladenosine biosynthesis protein TsaD</fullName>
    </alternativeName>
</protein>
<name>TSAD_LARHH</name>
<keyword id="KW-0012">Acyltransferase</keyword>
<keyword id="KW-0963">Cytoplasm</keyword>
<keyword id="KW-0408">Iron</keyword>
<keyword id="KW-0479">Metal-binding</keyword>
<keyword id="KW-1185">Reference proteome</keyword>
<keyword id="KW-0808">Transferase</keyword>
<keyword id="KW-0819">tRNA processing</keyword>
<comment type="function">
    <text evidence="1">Required for the formation of a threonylcarbamoyl group on adenosine at position 37 (t(6)A37) in tRNAs that read codons beginning with adenine. Is involved in the transfer of the threonylcarbamoyl moiety of threonylcarbamoyl-AMP (TC-AMP) to the N6 group of A37, together with TsaE and TsaB. TsaD likely plays a direct catalytic role in this reaction.</text>
</comment>
<comment type="catalytic activity">
    <reaction evidence="1">
        <text>L-threonylcarbamoyladenylate + adenosine(37) in tRNA = N(6)-L-threonylcarbamoyladenosine(37) in tRNA + AMP + H(+)</text>
        <dbReference type="Rhea" id="RHEA:37059"/>
        <dbReference type="Rhea" id="RHEA-COMP:10162"/>
        <dbReference type="Rhea" id="RHEA-COMP:10163"/>
        <dbReference type="ChEBI" id="CHEBI:15378"/>
        <dbReference type="ChEBI" id="CHEBI:73682"/>
        <dbReference type="ChEBI" id="CHEBI:74411"/>
        <dbReference type="ChEBI" id="CHEBI:74418"/>
        <dbReference type="ChEBI" id="CHEBI:456215"/>
        <dbReference type="EC" id="2.3.1.234"/>
    </reaction>
</comment>
<comment type="cofactor">
    <cofactor evidence="1">
        <name>Fe(2+)</name>
        <dbReference type="ChEBI" id="CHEBI:29033"/>
    </cofactor>
    <text evidence="1">Binds 1 Fe(2+) ion per subunit.</text>
</comment>
<comment type="subcellular location">
    <subcellularLocation>
        <location evidence="1">Cytoplasm</location>
    </subcellularLocation>
</comment>
<comment type="similarity">
    <text evidence="1">Belongs to the KAE1 / TsaD family.</text>
</comment>
<sequence>MLVLGFESSCDETGVALYDTERGLVAHALHTQMAMHAEYGGVVPELASRDHIRRIIPLTQACLAEGGKTLADLDAIAFTQGPGLGGALLVGASVANALAFGLDIPVIDVHHLEGHLLSPMLADPAPAFPFVALLVSGGHTQLMAVHGVGQYETLGETLDDAAGEAFDKTAKLLGLPYPGGPLLSRLAESGDPARFTLPRPMLNSADLDMSFSGLKTAVLTLKTRVEADLGPIDEQTRADICRAFQESIVEVLVKKSLGALKRTGLKRLVVAGGVGANRQLRAALDAACARRRVEVFYPPLSLCTDNGAMIALAGAMRLKQAHAAGSFSIKPRWDLSSLPPVNGAA</sequence>
<proteinExistence type="inferred from homology"/>
<dbReference type="EC" id="2.3.1.234" evidence="1"/>
<dbReference type="EMBL" id="CP001154">
    <property type="protein sequence ID" value="ACO75351.1"/>
    <property type="molecule type" value="Genomic_DNA"/>
</dbReference>
<dbReference type="RefSeq" id="WP_012697837.1">
    <property type="nucleotide sequence ID" value="NC_012559.1"/>
</dbReference>
<dbReference type="SMR" id="C1DB12"/>
<dbReference type="STRING" id="557598.LHK_02369"/>
<dbReference type="GeneID" id="75109983"/>
<dbReference type="KEGG" id="lhk:LHK_02369"/>
<dbReference type="eggNOG" id="COG0533">
    <property type="taxonomic scope" value="Bacteria"/>
</dbReference>
<dbReference type="HOGENOM" id="CLU_023208_0_2_4"/>
<dbReference type="Proteomes" id="UP000002010">
    <property type="component" value="Chromosome"/>
</dbReference>
<dbReference type="GO" id="GO:0005737">
    <property type="term" value="C:cytoplasm"/>
    <property type="evidence" value="ECO:0007669"/>
    <property type="project" value="UniProtKB-SubCell"/>
</dbReference>
<dbReference type="GO" id="GO:0005506">
    <property type="term" value="F:iron ion binding"/>
    <property type="evidence" value="ECO:0007669"/>
    <property type="project" value="UniProtKB-UniRule"/>
</dbReference>
<dbReference type="GO" id="GO:0061711">
    <property type="term" value="F:N(6)-L-threonylcarbamoyladenine synthase activity"/>
    <property type="evidence" value="ECO:0007669"/>
    <property type="project" value="UniProtKB-EC"/>
</dbReference>
<dbReference type="GO" id="GO:0002949">
    <property type="term" value="P:tRNA threonylcarbamoyladenosine modification"/>
    <property type="evidence" value="ECO:0007669"/>
    <property type="project" value="UniProtKB-UniRule"/>
</dbReference>
<dbReference type="CDD" id="cd24133">
    <property type="entry name" value="ASKHA_NBD_TsaD_bac"/>
    <property type="match status" value="1"/>
</dbReference>
<dbReference type="FunFam" id="3.30.420.40:FF:000040">
    <property type="entry name" value="tRNA N6-adenosine threonylcarbamoyltransferase"/>
    <property type="match status" value="1"/>
</dbReference>
<dbReference type="Gene3D" id="3.30.420.40">
    <property type="match status" value="2"/>
</dbReference>
<dbReference type="HAMAP" id="MF_01445">
    <property type="entry name" value="TsaD"/>
    <property type="match status" value="1"/>
</dbReference>
<dbReference type="InterPro" id="IPR043129">
    <property type="entry name" value="ATPase_NBD"/>
</dbReference>
<dbReference type="InterPro" id="IPR000905">
    <property type="entry name" value="Gcp-like_dom"/>
</dbReference>
<dbReference type="InterPro" id="IPR017861">
    <property type="entry name" value="KAE1/TsaD"/>
</dbReference>
<dbReference type="InterPro" id="IPR022450">
    <property type="entry name" value="TsaD"/>
</dbReference>
<dbReference type="NCBIfam" id="TIGR00329">
    <property type="entry name" value="gcp_kae1"/>
    <property type="match status" value="1"/>
</dbReference>
<dbReference type="NCBIfam" id="TIGR03723">
    <property type="entry name" value="T6A_TsaD_YgjD"/>
    <property type="match status" value="1"/>
</dbReference>
<dbReference type="PANTHER" id="PTHR11735">
    <property type="entry name" value="TRNA N6-ADENOSINE THREONYLCARBAMOYLTRANSFERASE"/>
    <property type="match status" value="1"/>
</dbReference>
<dbReference type="PANTHER" id="PTHR11735:SF6">
    <property type="entry name" value="TRNA N6-ADENOSINE THREONYLCARBAMOYLTRANSFERASE, MITOCHONDRIAL"/>
    <property type="match status" value="1"/>
</dbReference>
<dbReference type="Pfam" id="PF00814">
    <property type="entry name" value="TsaD"/>
    <property type="match status" value="1"/>
</dbReference>
<dbReference type="PRINTS" id="PR00789">
    <property type="entry name" value="OSIALOPTASE"/>
</dbReference>
<dbReference type="SUPFAM" id="SSF53067">
    <property type="entry name" value="Actin-like ATPase domain"/>
    <property type="match status" value="2"/>
</dbReference>